<accession>Q75B65</accession>
<comment type="function">
    <text evidence="1">Required for cytoplasm to vacuole transport (Cvt), pexophagy and mitophagy. Also involved in endoplasmic reticulum-specific autophagic process and is essential for the survival of cells subjected to severe ER stress. Functions in protein retrieval from the endocytic pathway (By similarity).</text>
</comment>
<comment type="subcellular location">
    <subcellularLocation>
        <location evidence="1">Endosome membrane</location>
        <topology evidence="1">Peripheral membrane protein</topology>
    </subcellularLocation>
    <subcellularLocation>
        <location evidence="1">Preautophagosomal structure membrane</location>
        <topology evidence="1">Peripheral membrane protein</topology>
    </subcellularLocation>
</comment>
<comment type="domain">
    <text evidence="1">The PX domain binds phosphatidylinositol 3-phosphate which is necessary for peripheral membrane localization of ATG20 to the perivacuolar punctate structures.</text>
</comment>
<comment type="similarity">
    <text evidence="4">Belongs to the sorting nexin family.</text>
</comment>
<feature type="chain" id="PRO_0000213819" description="Autophagy-related protein 20">
    <location>
        <begin position="1"/>
        <end position="577"/>
    </location>
</feature>
<feature type="domain" description="PX" evidence="2">
    <location>
        <begin position="95"/>
        <end position="239"/>
    </location>
</feature>
<feature type="region of interest" description="Disordered" evidence="3">
    <location>
        <begin position="57"/>
        <end position="81"/>
    </location>
</feature>
<feature type="binding site" evidence="1">
    <location>
        <position position="131"/>
    </location>
    <ligand>
        <name>a 1,2-diacyl-sn-glycero-3-phospho-(1D-myo-inositol-3-phosphate)</name>
        <dbReference type="ChEBI" id="CHEBI:58088"/>
    </ligand>
</feature>
<feature type="binding site" evidence="1">
    <location>
        <position position="133"/>
    </location>
    <ligand>
        <name>a 1,2-diacyl-sn-glycero-3-phospho-(1D-myo-inositol-3-phosphate)</name>
        <dbReference type="ChEBI" id="CHEBI:58088"/>
    </ligand>
</feature>
<feature type="binding site" evidence="1">
    <location>
        <position position="157"/>
    </location>
    <ligand>
        <name>a 1,2-diacyl-sn-glycero-3-phospho-(1D-myo-inositol-3-phosphate)</name>
        <dbReference type="ChEBI" id="CHEBI:58088"/>
    </ligand>
</feature>
<feature type="binding site" evidence="1">
    <location>
        <position position="205"/>
    </location>
    <ligand>
        <name>a 1,2-diacyl-sn-glycero-3-phospho-(1D-myo-inositol-3-phosphate)</name>
        <dbReference type="ChEBI" id="CHEBI:58088"/>
    </ligand>
</feature>
<organism>
    <name type="scientific">Eremothecium gossypii (strain ATCC 10895 / CBS 109.51 / FGSC 9923 / NRRL Y-1056)</name>
    <name type="common">Yeast</name>
    <name type="synonym">Ashbya gossypii</name>
    <dbReference type="NCBI Taxonomy" id="284811"/>
    <lineage>
        <taxon>Eukaryota</taxon>
        <taxon>Fungi</taxon>
        <taxon>Dikarya</taxon>
        <taxon>Ascomycota</taxon>
        <taxon>Saccharomycotina</taxon>
        <taxon>Saccharomycetes</taxon>
        <taxon>Saccharomycetales</taxon>
        <taxon>Saccharomycetaceae</taxon>
        <taxon>Eremothecium</taxon>
    </lineage>
</organism>
<gene>
    <name type="primary">ATG20</name>
    <name type="ordered locus">ADL293W</name>
</gene>
<name>ATG20_EREGS</name>
<protein>
    <recommendedName>
        <fullName>Autophagy-related protein 20</fullName>
    </recommendedName>
</protein>
<evidence type="ECO:0000250" key="1"/>
<evidence type="ECO:0000255" key="2">
    <source>
        <dbReference type="PROSITE-ProRule" id="PRU00147"/>
    </source>
</evidence>
<evidence type="ECO:0000256" key="3">
    <source>
        <dbReference type="SAM" id="MobiDB-lite"/>
    </source>
</evidence>
<evidence type="ECO:0000305" key="4"/>
<dbReference type="EMBL" id="AE016817">
    <property type="protein sequence ID" value="AAS51627.1"/>
    <property type="molecule type" value="Genomic_DNA"/>
</dbReference>
<dbReference type="RefSeq" id="NP_983803.1">
    <property type="nucleotide sequence ID" value="NM_209156.1"/>
</dbReference>
<dbReference type="SMR" id="Q75B65"/>
<dbReference type="FunCoup" id="Q75B65">
    <property type="interactions" value="166"/>
</dbReference>
<dbReference type="STRING" id="284811.Q75B65"/>
<dbReference type="EnsemblFungi" id="AAS51627">
    <property type="protein sequence ID" value="AAS51627"/>
    <property type="gene ID" value="AGOS_ADL293W"/>
</dbReference>
<dbReference type="GeneID" id="4619938"/>
<dbReference type="KEGG" id="ago:AGOS_ADL293W"/>
<dbReference type="eggNOG" id="KOG2273">
    <property type="taxonomic scope" value="Eukaryota"/>
</dbReference>
<dbReference type="HOGENOM" id="CLU_014456_0_0_1"/>
<dbReference type="InParanoid" id="Q75B65"/>
<dbReference type="OMA" id="ICNTDIT"/>
<dbReference type="OrthoDB" id="289314at2759"/>
<dbReference type="Proteomes" id="UP000000591">
    <property type="component" value="Chromosome IV"/>
</dbReference>
<dbReference type="GO" id="GO:0010009">
    <property type="term" value="C:cytoplasmic side of endosome membrane"/>
    <property type="evidence" value="ECO:0007669"/>
    <property type="project" value="EnsemblFungi"/>
</dbReference>
<dbReference type="GO" id="GO:0005829">
    <property type="term" value="C:cytosol"/>
    <property type="evidence" value="ECO:0007669"/>
    <property type="project" value="GOC"/>
</dbReference>
<dbReference type="GO" id="GO:0000407">
    <property type="term" value="C:phagophore assembly site"/>
    <property type="evidence" value="ECO:0000318"/>
    <property type="project" value="GO_Central"/>
</dbReference>
<dbReference type="GO" id="GO:0034045">
    <property type="term" value="C:phagophore assembly site membrane"/>
    <property type="evidence" value="ECO:0007669"/>
    <property type="project" value="UniProtKB-SubCell"/>
</dbReference>
<dbReference type="GO" id="GO:0032266">
    <property type="term" value="F:phosphatidylinositol-3-phosphate binding"/>
    <property type="evidence" value="ECO:0000318"/>
    <property type="project" value="GO_Central"/>
</dbReference>
<dbReference type="GO" id="GO:0000422">
    <property type="term" value="P:autophagy of mitochondrion"/>
    <property type="evidence" value="ECO:0000318"/>
    <property type="project" value="GO_Central"/>
</dbReference>
<dbReference type="GO" id="GO:0032258">
    <property type="term" value="P:cytoplasm to vacuole targeting by the Cvt pathway"/>
    <property type="evidence" value="ECO:0007669"/>
    <property type="project" value="EnsemblFungi"/>
</dbReference>
<dbReference type="GO" id="GO:0034498">
    <property type="term" value="P:early endosome to Golgi transport"/>
    <property type="evidence" value="ECO:0007669"/>
    <property type="project" value="EnsemblFungi"/>
</dbReference>
<dbReference type="GO" id="GO:0061709">
    <property type="term" value="P:reticulophagy"/>
    <property type="evidence" value="ECO:0000318"/>
    <property type="project" value="GO_Central"/>
</dbReference>
<dbReference type="CDD" id="cd07629">
    <property type="entry name" value="BAR_Atg20p"/>
    <property type="match status" value="1"/>
</dbReference>
<dbReference type="CDD" id="cd06867">
    <property type="entry name" value="PX_SNX41_42"/>
    <property type="match status" value="1"/>
</dbReference>
<dbReference type="Gene3D" id="1.20.1270.60">
    <property type="entry name" value="Arfaptin homology (AH) domain/BAR domain"/>
    <property type="match status" value="1"/>
</dbReference>
<dbReference type="Gene3D" id="3.30.1520.10">
    <property type="entry name" value="Phox-like domain"/>
    <property type="match status" value="1"/>
</dbReference>
<dbReference type="InterPro" id="IPR027267">
    <property type="entry name" value="AH/BAR_dom_sf"/>
</dbReference>
<dbReference type="InterPro" id="IPR001683">
    <property type="entry name" value="PX_dom"/>
</dbReference>
<dbReference type="InterPro" id="IPR036871">
    <property type="entry name" value="PX_dom_sf"/>
</dbReference>
<dbReference type="InterPro" id="IPR044106">
    <property type="entry name" value="PX_Snx41/Atg20"/>
</dbReference>
<dbReference type="InterPro" id="IPR051079">
    <property type="entry name" value="Sorting_Nexin_Autophagy"/>
</dbReference>
<dbReference type="PANTHER" id="PTHR46979:SF1">
    <property type="entry name" value="AUTOPHAGY-RELATED PROTEIN 20"/>
    <property type="match status" value="1"/>
</dbReference>
<dbReference type="PANTHER" id="PTHR46979">
    <property type="entry name" value="SORTING NEXIN-41"/>
    <property type="match status" value="1"/>
</dbReference>
<dbReference type="Pfam" id="PF00787">
    <property type="entry name" value="PX"/>
    <property type="match status" value="1"/>
</dbReference>
<dbReference type="SMART" id="SM00312">
    <property type="entry name" value="PX"/>
    <property type="match status" value="1"/>
</dbReference>
<dbReference type="SUPFAM" id="SSF103657">
    <property type="entry name" value="BAR/IMD domain-like"/>
    <property type="match status" value="1"/>
</dbReference>
<dbReference type="SUPFAM" id="SSF64268">
    <property type="entry name" value="PX domain"/>
    <property type="match status" value="1"/>
</dbReference>
<dbReference type="PROSITE" id="PS50195">
    <property type="entry name" value="PX"/>
    <property type="match status" value="1"/>
</dbReference>
<sequence length="577" mass="63967">MTEQSEHSNGGVCASSIQPARNGGLCGHGGVGGVGEAEGDPVHTQIIQEDNPFVEHGQSYVAPHSGGGRTSSGSSSSASLQEGLLAPPLAKSSAGEQGRVRILEASKVSEGQGRSYITYTISYRDRVVRRRYSEFESLRKILIKLFPMTLIPPIPEKQSLTSYGKSIAGSNANYVLPSEAAGCDLAVSVINGSVNLNDQKMIRHRIRMLTSFLNRLLQNEEVTKTSIIGDFLDPNNANWNDVITTSATISSLPKSVLQCNPLDPTNTTPAHASLPIPPLSSAPQLMGKDGVGTSTKPSAEDMEFSRIEYEYKKYEQLLHTGVYKYNRRITRTMHELKQDLADLSEAFAEFAVEQSKGGDLAELLSYLSNANDEAAAVLDDLVGKIYYNINEPLSEAVHIAGAARELIQYRRLKFAQRDMLKKSLLGKEGHLKRLQEQEDDAKAIDQLVDQHLGEGTRINLQRPSEASPNTYKRKLFSRFNKLANIVKETVTYQEQDPKVNIKTVQEDIEQIKESLDVSASDLDVITATIRDVQLPAFSRNRDKELYDILKNYSKYMKEYAAKNLEIWKDLRKQEENA</sequence>
<reference key="1">
    <citation type="journal article" date="2004" name="Science">
        <title>The Ashbya gossypii genome as a tool for mapping the ancient Saccharomyces cerevisiae genome.</title>
        <authorList>
            <person name="Dietrich F.S."/>
            <person name="Voegeli S."/>
            <person name="Brachat S."/>
            <person name="Lerch A."/>
            <person name="Gates K."/>
            <person name="Steiner S."/>
            <person name="Mohr C."/>
            <person name="Poehlmann R."/>
            <person name="Luedi P."/>
            <person name="Choi S."/>
            <person name="Wing R.A."/>
            <person name="Flavier A."/>
            <person name="Gaffney T.D."/>
            <person name="Philippsen P."/>
        </authorList>
    </citation>
    <scope>NUCLEOTIDE SEQUENCE [LARGE SCALE GENOMIC DNA]</scope>
    <source>
        <strain>ATCC 10895 / CBS 109.51 / FGSC 9923 / NRRL Y-1056</strain>
    </source>
</reference>
<reference key="2">
    <citation type="journal article" date="2013" name="G3 (Bethesda)">
        <title>Genomes of Ashbya fungi isolated from insects reveal four mating-type loci, numerous translocations, lack of transposons, and distinct gene duplications.</title>
        <authorList>
            <person name="Dietrich F.S."/>
            <person name="Voegeli S."/>
            <person name="Kuo S."/>
            <person name="Philippsen P."/>
        </authorList>
    </citation>
    <scope>GENOME REANNOTATION</scope>
    <source>
        <strain>ATCC 10895 / CBS 109.51 / FGSC 9923 / NRRL Y-1056</strain>
    </source>
</reference>
<keyword id="KW-0072">Autophagy</keyword>
<keyword id="KW-0967">Endosome</keyword>
<keyword id="KW-0446">Lipid-binding</keyword>
<keyword id="KW-0472">Membrane</keyword>
<keyword id="KW-0653">Protein transport</keyword>
<keyword id="KW-1185">Reference proteome</keyword>
<keyword id="KW-0813">Transport</keyword>
<proteinExistence type="inferred from homology"/>